<proteinExistence type="evidence at transcript level"/>
<evidence type="ECO:0000250" key="1"/>
<evidence type="ECO:0000250" key="2">
    <source>
        <dbReference type="UniProtKB" id="O18979"/>
    </source>
</evidence>
<evidence type="ECO:0000255" key="3"/>
<evidence type="ECO:0000256" key="4">
    <source>
        <dbReference type="SAM" id="MobiDB-lite"/>
    </source>
</evidence>
<evidence type="ECO:0000269" key="5">
    <source ref="5"/>
</evidence>
<evidence type="ECO:0000303" key="6">
    <source>
    </source>
</evidence>
<evidence type="ECO:0000303" key="7">
    <source>
    </source>
</evidence>
<evidence type="ECO:0000303" key="8">
    <source>
    </source>
</evidence>
<evidence type="ECO:0000303" key="9">
    <source ref="5"/>
</evidence>
<evidence type="ECO:0000305" key="10"/>
<evidence type="ECO:0000312" key="11">
    <source>
        <dbReference type="EMBL" id="AAD11805.1"/>
    </source>
</evidence>
<evidence type="ECO:0000312" key="12">
    <source>
        <dbReference type="EMBL" id="AAD55061.1"/>
    </source>
</evidence>
<evidence type="ECO:0000312" key="13">
    <source>
        <dbReference type="EMBL" id="BAC30214.1"/>
    </source>
</evidence>
<evidence type="ECO:0000312" key="14">
    <source>
        <dbReference type="EMBL" id="CAA09026.1"/>
    </source>
</evidence>
<evidence type="ECO:0000312" key="15">
    <source>
        <dbReference type="EMBL" id="CAB57280.1"/>
    </source>
</evidence>
<evidence type="ECO:0000312" key="16">
    <source>
        <dbReference type="EMBL" id="CAB83218.1"/>
    </source>
</evidence>
<evidence type="ECO:0000312" key="17">
    <source>
        <dbReference type="MGI" id="MGI:95777"/>
    </source>
</evidence>
<name>GNAS3_MOUSE</name>
<accession>Q9Z0F1</accession>
<accession>Q9QXW5</accession>
<accession>Q9Z0H2</accession>
<gene>
    <name evidence="17" type="primary">Gnas</name>
    <name evidence="17" type="synonym">Gnas1</name>
</gene>
<sequence length="257" mass="29301">MDRRSRAQQWRRARHNYNDLCPPIGRRAATALLWLSCSIALLRALASSNARAQQRAAQRRSFLNAHHRSAAAAAAAQVLPESSESESDHEHEEVEPELARPECLEYDQDDYETETDSETEPESDIESETEIETEPETEPETAPTTEPETEPEDERGPRGATFNQSLTQRLHALKLQSADASPRRAQPTTQEPESASEGEEPQRGPLDQDPRDPEEEPEERKEENRQPRRCKTRRPARRRDQSPESPPRKGPIPIRRH</sequence>
<protein>
    <recommendedName>
        <fullName>Neuroendocrine secretory protein 55</fullName>
        <shortName>NESP55</shortName>
    </recommendedName>
    <component>
        <recommendedName>
            <fullName>LHAL tetrapeptide</fullName>
        </recommendedName>
    </component>
    <component>
        <recommendedName>
            <fullName>GPIPIRRH peptide</fullName>
        </recommendedName>
    </component>
</protein>
<organism>
    <name type="scientific">Mus musculus</name>
    <name type="common">Mouse</name>
    <dbReference type="NCBI Taxonomy" id="10090"/>
    <lineage>
        <taxon>Eukaryota</taxon>
        <taxon>Metazoa</taxon>
        <taxon>Chordata</taxon>
        <taxon>Craniata</taxon>
        <taxon>Vertebrata</taxon>
        <taxon>Euteleostomi</taxon>
        <taxon>Mammalia</taxon>
        <taxon>Eutheria</taxon>
        <taxon>Euarchontoglires</taxon>
        <taxon>Glires</taxon>
        <taxon>Rodentia</taxon>
        <taxon>Myomorpha</taxon>
        <taxon>Muroidea</taxon>
        <taxon>Muridae</taxon>
        <taxon>Murinae</taxon>
        <taxon>Mus</taxon>
        <taxon>Mus</taxon>
    </lineage>
</organism>
<dbReference type="EMBL" id="AJ010163">
    <property type="protein sequence ID" value="CAA09026.1"/>
    <property type="molecule type" value="mRNA"/>
</dbReference>
<dbReference type="EMBL" id="AJ245401">
    <property type="protein sequence ID" value="CAB57280.1"/>
    <property type="molecule type" value="Genomic_DNA"/>
</dbReference>
<dbReference type="EMBL" id="AJ251761">
    <property type="protein sequence ID" value="CAB83218.1"/>
    <property type="molecule type" value="Genomic_DNA"/>
</dbReference>
<dbReference type="EMBL" id="AF175305">
    <property type="protein sequence ID" value="AAD55061.1"/>
    <property type="molecule type" value="mRNA"/>
</dbReference>
<dbReference type="EMBL" id="AF107847">
    <property type="protein sequence ID" value="AAD11805.1"/>
    <property type="molecule type" value="mRNA"/>
</dbReference>
<dbReference type="EMBL" id="AF107848">
    <property type="protein sequence ID" value="AAD11806.1"/>
    <property type="molecule type" value="mRNA"/>
</dbReference>
<dbReference type="EMBL" id="AK039035">
    <property type="protein sequence ID" value="BAC30214.1"/>
    <property type="molecule type" value="mRNA"/>
</dbReference>
<dbReference type="CCDS" id="CCDS17149.1">
    <molecule id="Q9Z0F1-2"/>
</dbReference>
<dbReference type="RefSeq" id="NP_062664.2">
    <molecule id="Q9Z0F1-2"/>
    <property type="nucleotide sequence ID" value="NM_019690.3"/>
</dbReference>
<dbReference type="RefSeq" id="NP_068840.2">
    <molecule id="Q9Z0F1-2"/>
    <property type="nucleotide sequence ID" value="NM_022000.3"/>
</dbReference>
<dbReference type="RefSeq" id="XP_006498842.1">
    <property type="nucleotide sequence ID" value="XM_006498779.3"/>
</dbReference>
<dbReference type="BioGRID" id="199972">
    <property type="interactions" value="38"/>
</dbReference>
<dbReference type="iPTMnet" id="Q9Z0F1"/>
<dbReference type="ProteomicsDB" id="271240">
    <molecule id="Q9Z0F1-1"/>
</dbReference>
<dbReference type="ProteomicsDB" id="271241">
    <molecule id="Q9Z0F1-2"/>
</dbReference>
<dbReference type="Antibodypedia" id="4152">
    <property type="antibodies" value="800 antibodies from 43 providers"/>
</dbReference>
<dbReference type="DNASU" id="14683"/>
<dbReference type="Ensembl" id="ENSMUST00000109095.8">
    <molecule id="Q9Z0F1-2"/>
    <property type="protein sequence ID" value="ENSMUSP00000104723.2"/>
    <property type="gene ID" value="ENSMUSG00000027523.21"/>
</dbReference>
<dbReference type="Ensembl" id="ENSMUST00000109096.9">
    <molecule id="Q9Z0F1-2"/>
    <property type="protein sequence ID" value="ENSMUSP00000104724.3"/>
    <property type="gene ID" value="ENSMUSG00000027523.21"/>
</dbReference>
<dbReference type="Ensembl" id="ENSMUST00000180362.8">
    <molecule id="Q9Z0F1-2"/>
    <property type="protein sequence ID" value="ENSMUSP00000136180.2"/>
    <property type="gene ID" value="ENSMUSG00000027523.21"/>
</dbReference>
<dbReference type="GeneID" id="14683"/>
<dbReference type="UCSC" id="uc008oer.1">
    <molecule id="Q9Z0F1-2"/>
    <property type="organism name" value="mouse"/>
</dbReference>
<dbReference type="AGR" id="MGI:95777"/>
<dbReference type="CTD" id="2778"/>
<dbReference type="MGI" id="MGI:95777">
    <property type="gene designation" value="Gnas"/>
</dbReference>
<dbReference type="VEuPathDB" id="HostDB:ENSMUSG00000027523"/>
<dbReference type="GeneTree" id="ENSGT00940000156300"/>
<dbReference type="HOGENOM" id="CLU_100255_0_0_1"/>
<dbReference type="OrthoDB" id="9836061at2759"/>
<dbReference type="BioGRID-ORCS" id="14683">
    <property type="hits" value="12 hits in 78 CRISPR screens"/>
</dbReference>
<dbReference type="ChiTaRS" id="Gnas">
    <property type="organism name" value="mouse"/>
</dbReference>
<dbReference type="Proteomes" id="UP000000589">
    <property type="component" value="Chromosome 2"/>
</dbReference>
<dbReference type="Bgee" id="ENSMUSG00000027523">
    <property type="expression patterns" value="Expressed in superior cervical ganglion and 273 other cell types or tissues"/>
</dbReference>
<dbReference type="ExpressionAtlas" id="Q9Z0F1">
    <property type="expression patterns" value="baseline and differential"/>
</dbReference>
<dbReference type="GO" id="GO:0030425">
    <property type="term" value="C:dendrite"/>
    <property type="evidence" value="ECO:0000314"/>
    <property type="project" value="MGI"/>
</dbReference>
<dbReference type="GO" id="GO:0005576">
    <property type="term" value="C:extracellular region"/>
    <property type="evidence" value="ECO:0007669"/>
    <property type="project" value="UniProtKB-SubCell"/>
</dbReference>
<dbReference type="GO" id="GO:0005834">
    <property type="term" value="C:heterotrimeric G-protein complex"/>
    <property type="evidence" value="ECO:0000266"/>
    <property type="project" value="MGI"/>
</dbReference>
<dbReference type="GO" id="GO:0016020">
    <property type="term" value="C:membrane"/>
    <property type="evidence" value="ECO:0000314"/>
    <property type="project" value="MGI"/>
</dbReference>
<dbReference type="GO" id="GO:0005886">
    <property type="term" value="C:plasma membrane"/>
    <property type="evidence" value="ECO:0000314"/>
    <property type="project" value="MGI"/>
</dbReference>
<dbReference type="GO" id="GO:0030133">
    <property type="term" value="C:transport vesicle"/>
    <property type="evidence" value="ECO:0007669"/>
    <property type="project" value="UniProtKB-SubCell"/>
</dbReference>
<dbReference type="GO" id="GO:0010856">
    <property type="term" value="F:adenylate cyclase activator activity"/>
    <property type="evidence" value="ECO:0000314"/>
    <property type="project" value="MGI"/>
</dbReference>
<dbReference type="GO" id="GO:0010854">
    <property type="term" value="F:adenylate cyclase regulator activity"/>
    <property type="evidence" value="ECO:0000315"/>
    <property type="project" value="MGI"/>
</dbReference>
<dbReference type="GO" id="GO:0047391">
    <property type="term" value="F:alkylglycerophosphoethanolamine phosphodiesterase activity"/>
    <property type="evidence" value="ECO:0000266"/>
    <property type="project" value="MGI"/>
</dbReference>
<dbReference type="GO" id="GO:0003925">
    <property type="term" value="F:G protein activity"/>
    <property type="evidence" value="ECO:0000315"/>
    <property type="project" value="MGI"/>
</dbReference>
<dbReference type="GO" id="GO:0003924">
    <property type="term" value="F:GTPase activity"/>
    <property type="evidence" value="ECO:0000266"/>
    <property type="project" value="MGI"/>
</dbReference>
<dbReference type="GO" id="GO:0007191">
    <property type="term" value="P:adenylate cyclase-activating dopamine receptor signaling pathway"/>
    <property type="evidence" value="ECO:0000316"/>
    <property type="project" value="MGI"/>
</dbReference>
<dbReference type="GO" id="GO:0007189">
    <property type="term" value="P:adenylate cyclase-activating G protein-coupled receptor signaling pathway"/>
    <property type="evidence" value="ECO:0000314"/>
    <property type="project" value="MGI"/>
</dbReference>
<dbReference type="GO" id="GO:0051216">
    <property type="term" value="P:cartilage development"/>
    <property type="evidence" value="ECO:0000315"/>
    <property type="project" value="MGI"/>
</dbReference>
<dbReference type="GO" id="GO:0071377">
    <property type="term" value="P:cellular response to glucagon stimulus"/>
    <property type="evidence" value="ECO:0000315"/>
    <property type="project" value="MGI"/>
</dbReference>
<dbReference type="GO" id="GO:0048701">
    <property type="term" value="P:embryonic cranial skeleton morphogenesis"/>
    <property type="evidence" value="ECO:0000315"/>
    <property type="project" value="MGI"/>
</dbReference>
<dbReference type="GO" id="GO:0035116">
    <property type="term" value="P:embryonic hindlimb morphogenesis"/>
    <property type="evidence" value="ECO:0000315"/>
    <property type="project" value="MGI"/>
</dbReference>
<dbReference type="GO" id="GO:0001958">
    <property type="term" value="P:endochondral ossification"/>
    <property type="evidence" value="ECO:0000315"/>
    <property type="project" value="MGI"/>
</dbReference>
<dbReference type="GO" id="GO:0006112">
    <property type="term" value="P:energy reserve metabolic process"/>
    <property type="evidence" value="ECO:0000315"/>
    <property type="project" value="MGI"/>
</dbReference>
<dbReference type="GO" id="GO:0007186">
    <property type="term" value="P:G protein-coupled receptor signaling pathway"/>
    <property type="evidence" value="ECO:0000304"/>
    <property type="project" value="MGI"/>
</dbReference>
<dbReference type="GO" id="GO:0071514">
    <property type="term" value="P:genomic imprinting"/>
    <property type="evidence" value="ECO:0000315"/>
    <property type="project" value="MGI"/>
</dbReference>
<dbReference type="GO" id="GO:0035264">
    <property type="term" value="P:multicellular organism growth"/>
    <property type="evidence" value="ECO:0000315"/>
    <property type="project" value="MGI"/>
</dbReference>
<dbReference type="GO" id="GO:0040015">
    <property type="term" value="P:negative regulation of multicellular organism growth"/>
    <property type="evidence" value="ECO:0000315"/>
    <property type="project" value="UniProtKB"/>
</dbReference>
<dbReference type="GO" id="GO:0120162">
    <property type="term" value="P:positive regulation of cold-induced thermogenesis"/>
    <property type="evidence" value="ECO:0000315"/>
    <property type="project" value="YuBioLab"/>
</dbReference>
<dbReference type="GO" id="GO:0032024">
    <property type="term" value="P:positive regulation of insulin secretion"/>
    <property type="evidence" value="ECO:0000314"/>
    <property type="project" value="MGI"/>
</dbReference>
<dbReference type="GO" id="GO:0045669">
    <property type="term" value="P:positive regulation of osteoblast differentiation"/>
    <property type="evidence" value="ECO:0000315"/>
    <property type="project" value="MGI"/>
</dbReference>
<dbReference type="GO" id="GO:0045672">
    <property type="term" value="P:positive regulation of osteoclast differentiation"/>
    <property type="evidence" value="ECO:0000315"/>
    <property type="project" value="MGI"/>
</dbReference>
<dbReference type="GO" id="GO:0040032">
    <property type="term" value="P:post-embryonic body morphogenesis"/>
    <property type="evidence" value="ECO:0000315"/>
    <property type="project" value="MGI"/>
</dbReference>
<dbReference type="GO" id="GO:0009791">
    <property type="term" value="P:post-embryonic development"/>
    <property type="evidence" value="ECO:0000315"/>
    <property type="project" value="MGI"/>
</dbReference>
<dbReference type="GO" id="GO:2000828">
    <property type="term" value="P:regulation of parathyroid hormone secretion"/>
    <property type="evidence" value="ECO:0000315"/>
    <property type="project" value="MGI"/>
</dbReference>
<dbReference type="GO" id="GO:0071107">
    <property type="term" value="P:response to parathyroid hormone"/>
    <property type="evidence" value="ECO:0007669"/>
    <property type="project" value="InterPro"/>
</dbReference>
<dbReference type="GO" id="GO:0009410">
    <property type="term" value="P:response to xenobiotic stimulus"/>
    <property type="evidence" value="ECO:0000315"/>
    <property type="project" value="MGI"/>
</dbReference>
<dbReference type="GO" id="GO:0001501">
    <property type="term" value="P:skeletal system development"/>
    <property type="evidence" value="ECO:0000315"/>
    <property type="project" value="MGI"/>
</dbReference>
<dbReference type="GO" id="GO:0043588">
    <property type="term" value="P:skin development"/>
    <property type="evidence" value="ECO:0000315"/>
    <property type="project" value="MGI"/>
</dbReference>
<dbReference type="GO" id="GO:0001894">
    <property type="term" value="P:tissue homeostasis"/>
    <property type="evidence" value="ECO:0000315"/>
    <property type="project" value="MGI"/>
</dbReference>
<dbReference type="InterPro" id="IPR009434">
    <property type="entry name" value="NESP55"/>
</dbReference>
<dbReference type="Pfam" id="PF06390">
    <property type="entry name" value="NESP55"/>
    <property type="match status" value="1"/>
</dbReference>
<comment type="subcellular location">
    <subcellularLocation>
        <location evidence="1">Cytoplasmic vesicle</location>
        <location evidence="1">Secretory vesicle</location>
    </subcellularLocation>
    <subcellularLocation>
        <location evidence="1">Secreted</location>
    </subcellularLocation>
    <text evidence="1">Neuroendocrine secretory granules.</text>
</comment>
<comment type="alternative products">
    <event type="alternative splicing"/>
    <isoform>
        <id>Q9Z0F1-1</id>
        <name evidence="5">Nesp55-1</name>
        <sequence type="displayed"/>
    </isoform>
    <isoform>
        <id>Q9Z0F1-2</id>
        <name evidence="5">Nesp55-2</name>
        <sequence type="described" ref="VSP_052181"/>
    </isoform>
    <isoform>
        <id>Q6R0H7-1</id>
        <name>XLas-1</name>
        <name evidence="10">XXL</name>
        <sequence type="external"/>
    </isoform>
    <isoform>
        <id>Q6R0H7-2</id>
        <name>XLas-2</name>
        <name evidence="10">XXLb1</name>
        <sequence type="external"/>
    </isoform>
    <isoform>
        <id>Q6R0H7-3</id>
        <name>XLas-3</name>
        <name evidence="10">XXLb2</name>
        <sequence type="external"/>
    </isoform>
    <isoform>
        <id>Q6R0H7-4</id>
        <name>XLas-4</name>
        <sequence type="external"/>
    </isoform>
    <isoform>
        <id>P63094-1</id>
        <name evidence="10">Gnas-1</name>
        <sequence type="external"/>
    </isoform>
    <isoform>
        <id>P63094-2</id>
        <name evidence="10">Gnas-2</name>
        <sequence type="external"/>
    </isoform>
    <isoform>
        <id>P63094-3</id>
        <name evidence="10">Gnas-3</name>
        <name evidence="10">NTas</name>
        <sequence type="external"/>
    </isoform>
</comment>
<comment type="PTM">
    <text evidence="2">Binds keratan sulfate chains.</text>
</comment>
<comment type="PTM">
    <text evidence="2">May be proteolytically processed to give rise to a number of active peptides.</text>
</comment>
<comment type="miscellaneous">
    <text evidence="10">This protein is produced by a bicistronic gene which also produces the ALEX protein from an overlapping reading frame.</text>
</comment>
<comment type="miscellaneous">
    <text>The GNAS locus is imprinted in a complex manner, giving rise to distinct paternally, maternally and biallelically expressed proteins. The XLas isoforms are paternally derived, the Gnas isoforms are biallelically derived and the Nesp55 isoforms are maternally derived.</text>
</comment>
<comment type="miscellaneous">
    <molecule>Isoform Nesp55-1</molecule>
    <text>Shares no sequence similarity with other isoforms (except isoform Nesp55-2) due to a novel first exon containing the entire reading frame spliced to shared exon 2 so that exons 2-13 make up the 3'-UTR.</text>
</comment>
<comment type="miscellaneous">
    <molecule>Isoform Nesp55-2</molecule>
    <text evidence="10">Shares no sequence similarity with other isoforms (except isoform Nesp55-1) due to a novel first exon containing the entire reading frame spliced to shared exon 2 so that exons 2-13 make up the 3'-UTR.</text>
</comment>
<comment type="similarity">
    <text evidence="3">Belongs to the NESP55 family.</text>
</comment>
<reference evidence="10 14" key="1">
    <citation type="journal article" date="1998" name="Proc. Natl. Acad. Sci. U.S.A.">
        <title>Bidirectional imprinting of a single gene: human GNAS1 encodes distinct maternally, paternally and biallelically derived proteins.</title>
        <authorList>
            <person name="Hayward B.E."/>
            <person name="Moran V."/>
            <person name="Strain L."/>
            <person name="Bonthron D.T."/>
        </authorList>
    </citation>
    <scope>NUCLEOTIDE SEQUENCE [MRNA] (ISOFORM NESP55-2)</scope>
</reference>
<reference evidence="10 15" key="2">
    <citation type="journal article" date="1999" name="Genomics">
        <title>Identification of imprinted loci by methylation-sensitive representational difference analysis: application to mouse distal chromosome 2.</title>
        <authorList>
            <person name="Kelsey G."/>
            <person name="Bodle D."/>
            <person name="Miller H.J."/>
            <person name="Beechey C.V."/>
            <person name="Coombes C."/>
            <person name="Peters J."/>
            <person name="Williamson C.M."/>
        </authorList>
    </citation>
    <scope>NUCLEOTIDE SEQUENCE [GENOMIC DNA] (ISOFORM NESP55-2)</scope>
    <source>
        <strain evidence="15">129/Ola</strain>
    </source>
</reference>
<reference evidence="10 16" key="3">
    <citation type="journal article" date="2000" name="Hum. Mol. Genet.">
        <title>An imprinted antisense transcript at the human GNAS1 locus.</title>
        <authorList>
            <person name="Hayward B.E."/>
            <person name="Bonthron D.T."/>
        </authorList>
    </citation>
    <scope>NUCLEOTIDE SEQUENCE [GENOMIC DNA] (ISOFORM NESP55-2)</scope>
</reference>
<reference evidence="10 12" key="4">
    <citation type="journal article" date="2000" name="Proc. Natl. Acad. Sci. U.S.A.">
        <title>An imprinted transcript, antisense to Nesp, adds complexity to the cluster of imprinted genes at the mouse Gnas locus.</title>
        <authorList>
            <person name="Wroe S.F."/>
            <person name="Kelsey G."/>
            <person name="Skinner J.A."/>
            <person name="Bodle D."/>
            <person name="Ball S.T."/>
            <person name="Beechey C.V."/>
            <person name="Peters J."/>
            <person name="Williamson C.M."/>
        </authorList>
    </citation>
    <scope>NUCLEOTIDE SEQUENCE [MRNA] (ISOFORM NESP55-2)</scope>
</reference>
<reference evidence="10 11" key="5">
    <citation type="submission" date="1998-11" db="EMBL/GenBank/DDBJ databases">
        <title>Molecular characterization of XL2, a neuroendocrine-specific luminal Golgi-resident protein.</title>
        <authorList>
            <person name="Wang Y.Z."/>
            <person name="Kehlenbach R.H."/>
            <person name="Huttner W.B."/>
        </authorList>
    </citation>
    <scope>NUCLEOTIDE SEQUENCE [MRNA] (ISOFORMS NESP55-1 AND NESP55-2)</scope>
    <source>
        <strain evidence="11">C57BL/6J</strain>
    </source>
</reference>
<reference evidence="10 13" key="6">
    <citation type="journal article" date="2005" name="Science">
        <title>The transcriptional landscape of the mammalian genome.</title>
        <authorList>
            <person name="Carninci P."/>
            <person name="Kasukawa T."/>
            <person name="Katayama S."/>
            <person name="Gough J."/>
            <person name="Frith M.C."/>
            <person name="Maeda N."/>
            <person name="Oyama R."/>
            <person name="Ravasi T."/>
            <person name="Lenhard B."/>
            <person name="Wells C."/>
            <person name="Kodzius R."/>
            <person name="Shimokawa K."/>
            <person name="Bajic V.B."/>
            <person name="Brenner S.E."/>
            <person name="Batalov S."/>
            <person name="Forrest A.R."/>
            <person name="Zavolan M."/>
            <person name="Davis M.J."/>
            <person name="Wilming L.G."/>
            <person name="Aidinis V."/>
            <person name="Allen J.E."/>
            <person name="Ambesi-Impiombato A."/>
            <person name="Apweiler R."/>
            <person name="Aturaliya R.N."/>
            <person name="Bailey T.L."/>
            <person name="Bansal M."/>
            <person name="Baxter L."/>
            <person name="Beisel K.W."/>
            <person name="Bersano T."/>
            <person name="Bono H."/>
            <person name="Chalk A.M."/>
            <person name="Chiu K.P."/>
            <person name="Choudhary V."/>
            <person name="Christoffels A."/>
            <person name="Clutterbuck D.R."/>
            <person name="Crowe M.L."/>
            <person name="Dalla E."/>
            <person name="Dalrymple B.P."/>
            <person name="de Bono B."/>
            <person name="Della Gatta G."/>
            <person name="di Bernardo D."/>
            <person name="Down T."/>
            <person name="Engstrom P."/>
            <person name="Fagiolini M."/>
            <person name="Faulkner G."/>
            <person name="Fletcher C.F."/>
            <person name="Fukushima T."/>
            <person name="Furuno M."/>
            <person name="Futaki S."/>
            <person name="Gariboldi M."/>
            <person name="Georgii-Hemming P."/>
            <person name="Gingeras T.R."/>
            <person name="Gojobori T."/>
            <person name="Green R.E."/>
            <person name="Gustincich S."/>
            <person name="Harbers M."/>
            <person name="Hayashi Y."/>
            <person name="Hensch T.K."/>
            <person name="Hirokawa N."/>
            <person name="Hill D."/>
            <person name="Huminiecki L."/>
            <person name="Iacono M."/>
            <person name="Ikeo K."/>
            <person name="Iwama A."/>
            <person name="Ishikawa T."/>
            <person name="Jakt M."/>
            <person name="Kanapin A."/>
            <person name="Katoh M."/>
            <person name="Kawasawa Y."/>
            <person name="Kelso J."/>
            <person name="Kitamura H."/>
            <person name="Kitano H."/>
            <person name="Kollias G."/>
            <person name="Krishnan S.P."/>
            <person name="Kruger A."/>
            <person name="Kummerfeld S.K."/>
            <person name="Kurochkin I.V."/>
            <person name="Lareau L.F."/>
            <person name="Lazarevic D."/>
            <person name="Lipovich L."/>
            <person name="Liu J."/>
            <person name="Liuni S."/>
            <person name="McWilliam S."/>
            <person name="Madan Babu M."/>
            <person name="Madera M."/>
            <person name="Marchionni L."/>
            <person name="Matsuda H."/>
            <person name="Matsuzawa S."/>
            <person name="Miki H."/>
            <person name="Mignone F."/>
            <person name="Miyake S."/>
            <person name="Morris K."/>
            <person name="Mottagui-Tabar S."/>
            <person name="Mulder N."/>
            <person name="Nakano N."/>
            <person name="Nakauchi H."/>
            <person name="Ng P."/>
            <person name="Nilsson R."/>
            <person name="Nishiguchi S."/>
            <person name="Nishikawa S."/>
            <person name="Nori F."/>
            <person name="Ohara O."/>
            <person name="Okazaki Y."/>
            <person name="Orlando V."/>
            <person name="Pang K.C."/>
            <person name="Pavan W.J."/>
            <person name="Pavesi G."/>
            <person name="Pesole G."/>
            <person name="Petrovsky N."/>
            <person name="Piazza S."/>
            <person name="Reed J."/>
            <person name="Reid J.F."/>
            <person name="Ring B.Z."/>
            <person name="Ringwald M."/>
            <person name="Rost B."/>
            <person name="Ruan Y."/>
            <person name="Salzberg S.L."/>
            <person name="Sandelin A."/>
            <person name="Schneider C."/>
            <person name="Schoenbach C."/>
            <person name="Sekiguchi K."/>
            <person name="Semple C.A."/>
            <person name="Seno S."/>
            <person name="Sessa L."/>
            <person name="Sheng Y."/>
            <person name="Shibata Y."/>
            <person name="Shimada H."/>
            <person name="Shimada K."/>
            <person name="Silva D."/>
            <person name="Sinclair B."/>
            <person name="Sperling S."/>
            <person name="Stupka E."/>
            <person name="Sugiura K."/>
            <person name="Sultana R."/>
            <person name="Takenaka Y."/>
            <person name="Taki K."/>
            <person name="Tammoja K."/>
            <person name="Tan S.L."/>
            <person name="Tang S."/>
            <person name="Taylor M.S."/>
            <person name="Tegner J."/>
            <person name="Teichmann S.A."/>
            <person name="Ueda H.R."/>
            <person name="van Nimwegen E."/>
            <person name="Verardo R."/>
            <person name="Wei C.L."/>
            <person name="Yagi K."/>
            <person name="Yamanishi H."/>
            <person name="Zabarovsky E."/>
            <person name="Zhu S."/>
            <person name="Zimmer A."/>
            <person name="Hide W."/>
            <person name="Bult C."/>
            <person name="Grimmond S.M."/>
            <person name="Teasdale R.D."/>
            <person name="Liu E.T."/>
            <person name="Brusic V."/>
            <person name="Quackenbush J."/>
            <person name="Wahlestedt C."/>
            <person name="Mattick J.S."/>
            <person name="Hume D.A."/>
            <person name="Kai C."/>
            <person name="Sasaki D."/>
            <person name="Tomaru Y."/>
            <person name="Fukuda S."/>
            <person name="Kanamori-Katayama M."/>
            <person name="Suzuki M."/>
            <person name="Aoki J."/>
            <person name="Arakawa T."/>
            <person name="Iida J."/>
            <person name="Imamura K."/>
            <person name="Itoh M."/>
            <person name="Kato T."/>
            <person name="Kawaji H."/>
            <person name="Kawagashira N."/>
            <person name="Kawashima T."/>
            <person name="Kojima M."/>
            <person name="Kondo S."/>
            <person name="Konno H."/>
            <person name="Nakano K."/>
            <person name="Ninomiya N."/>
            <person name="Nishio T."/>
            <person name="Okada M."/>
            <person name="Plessy C."/>
            <person name="Shibata K."/>
            <person name="Shiraki T."/>
            <person name="Suzuki S."/>
            <person name="Tagami M."/>
            <person name="Waki K."/>
            <person name="Watahiki A."/>
            <person name="Okamura-Oho Y."/>
            <person name="Suzuki H."/>
            <person name="Kawai J."/>
            <person name="Hayashizaki Y."/>
        </authorList>
    </citation>
    <scope>NUCLEOTIDE SEQUENCE [LARGE SCALE MRNA] (ISOFORM NESP55-2)</scope>
    <source>
        <strain evidence="13">C57BL/6J</strain>
        <tissue evidence="13">Hypothalamus</tissue>
    </source>
</reference>
<feature type="signal peptide" evidence="1">
    <location>
        <begin position="1"/>
        <end position="46"/>
    </location>
</feature>
<feature type="chain" id="PRO_0000253970" description="Neuroendocrine secretory protein 55">
    <location>
        <begin position="47"/>
        <end position="257"/>
    </location>
</feature>
<feature type="peptide" id="PRO_0000253971" description="LHAL tetrapeptide" evidence="2 3">
    <location>
        <begin position="170"/>
        <end position="173"/>
    </location>
</feature>
<feature type="peptide" id="PRO_0000253972" description="GPIPIRRH peptide" evidence="2 3">
    <location>
        <begin position="250"/>
        <end position="257"/>
    </location>
</feature>
<feature type="region of interest" description="Disordered" evidence="4">
    <location>
        <begin position="61"/>
        <end position="257"/>
    </location>
</feature>
<feature type="compositionally biased region" description="Low complexity" evidence="4">
    <location>
        <begin position="70"/>
        <end position="82"/>
    </location>
</feature>
<feature type="compositionally biased region" description="Basic and acidic residues" evidence="4">
    <location>
        <begin position="86"/>
        <end position="103"/>
    </location>
</feature>
<feature type="compositionally biased region" description="Acidic residues" evidence="4">
    <location>
        <begin position="104"/>
        <end position="139"/>
    </location>
</feature>
<feature type="compositionally biased region" description="Basic and acidic residues" evidence="4">
    <location>
        <begin position="200"/>
        <end position="211"/>
    </location>
</feature>
<feature type="compositionally biased region" description="Basic residues" evidence="4">
    <location>
        <begin position="227"/>
        <end position="237"/>
    </location>
</feature>
<feature type="splice variant" id="VSP_052181" description="In isoform Nesp55-2." evidence="6 7 8 9">
    <location>
        <begin position="141"/>
        <end position="144"/>
    </location>
</feature>
<feature type="sequence conflict" description="In Ref. 5; AAD11805." evidence="10" ref="5">
    <original>Q</original>
    <variation>H</variation>
    <location>
        <position position="8"/>
    </location>
</feature>
<feature type="sequence conflict" description="In Ref. 4; AAD55061." evidence="10" ref="4">
    <original>Q</original>
    <variation>H</variation>
    <location>
        <position position="58"/>
    </location>
</feature>
<feature type="sequence conflict" description="In Ref. 5; AAD11805." evidence="10" ref="5">
    <original>V</original>
    <variation>A</variation>
    <location>
        <position position="94"/>
    </location>
</feature>
<feature type="sequence conflict" description="In Ref. 5; AAD11805." evidence="10" ref="5">
    <original>E</original>
    <variation>Q</variation>
    <location>
        <position position="126"/>
    </location>
</feature>
<feature type="sequence conflict" description="In Ref. 5; AAD11805." evidence="10" ref="5">
    <original>I</original>
    <variation>F</variation>
    <location>
        <position position="131"/>
    </location>
</feature>
<feature type="sequence conflict" description="In Ref. 5; AAD11805." evidence="10" ref="5">
    <original>G</original>
    <variation>E</variation>
    <location>
        <position position="204"/>
    </location>
</feature>
<feature type="sequence conflict" description="In Ref. 5; AAD11805." evidence="10" ref="5">
    <original>Q</original>
    <variation>E</variation>
    <location>
        <position position="208"/>
    </location>
</feature>
<feature type="sequence conflict" description="In Ref. 5; AAD11805." evidence="10" ref="5">
    <original>EP</original>
    <variation>S</variation>
    <location>
        <begin position="216"/>
        <end position="217"/>
    </location>
</feature>
<feature type="sequence conflict" description="In Ref. 5; AAD11805." evidence="10" ref="5">
    <original>KEE</original>
    <variation>REA</variation>
    <location>
        <begin position="221"/>
        <end position="223"/>
    </location>
</feature>
<keyword id="KW-0025">Alternative splicing</keyword>
<keyword id="KW-0165">Cleavage on pair of basic residues</keyword>
<keyword id="KW-0968">Cytoplasmic vesicle</keyword>
<keyword id="KW-0325">Glycoprotein</keyword>
<keyword id="KW-0654">Proteoglycan</keyword>
<keyword id="KW-1185">Reference proteome</keyword>
<keyword id="KW-0964">Secreted</keyword>
<keyword id="KW-0732">Signal</keyword>